<organism>
    <name type="scientific">Canis lupus familiaris</name>
    <name type="common">Dog</name>
    <name type="synonym">Canis familiaris</name>
    <dbReference type="NCBI Taxonomy" id="9615"/>
    <lineage>
        <taxon>Eukaryota</taxon>
        <taxon>Metazoa</taxon>
        <taxon>Chordata</taxon>
        <taxon>Craniata</taxon>
        <taxon>Vertebrata</taxon>
        <taxon>Euteleostomi</taxon>
        <taxon>Mammalia</taxon>
        <taxon>Eutheria</taxon>
        <taxon>Laurasiatheria</taxon>
        <taxon>Carnivora</taxon>
        <taxon>Caniformia</taxon>
        <taxon>Canidae</taxon>
        <taxon>Canis</taxon>
    </lineage>
</organism>
<dbReference type="EMBL" id="AJ534245">
    <property type="protein sequence ID" value="CAD58782.1"/>
    <property type="molecule type" value="mRNA"/>
</dbReference>
<dbReference type="RefSeq" id="NP_001003014.1">
    <property type="nucleotide sequence ID" value="NM_001003014.1"/>
</dbReference>
<dbReference type="FunCoup" id="Q8HY39">
    <property type="interactions" value="385"/>
</dbReference>
<dbReference type="STRING" id="9615.ENSCAFP00000007398"/>
<dbReference type="PaxDb" id="9612-ENSCAFP00000007398"/>
<dbReference type="GeneID" id="403535"/>
<dbReference type="KEGG" id="cfa:403535"/>
<dbReference type="CTD" id="10567"/>
<dbReference type="eggNOG" id="KOG3142">
    <property type="taxonomic scope" value="Eukaryota"/>
</dbReference>
<dbReference type="InParanoid" id="Q8HY39"/>
<dbReference type="OrthoDB" id="63113at2759"/>
<dbReference type="Proteomes" id="UP000002254">
    <property type="component" value="Unplaced"/>
</dbReference>
<dbReference type="Proteomes" id="UP000694429">
    <property type="component" value="Unplaced"/>
</dbReference>
<dbReference type="Proteomes" id="UP000694542">
    <property type="component" value="Unplaced"/>
</dbReference>
<dbReference type="Proteomes" id="UP000805418">
    <property type="component" value="Unplaced"/>
</dbReference>
<dbReference type="GO" id="GO:0005794">
    <property type="term" value="C:Golgi apparatus"/>
    <property type="evidence" value="ECO:0000318"/>
    <property type="project" value="GO_Central"/>
</dbReference>
<dbReference type="GO" id="GO:0005886">
    <property type="term" value="C:plasma membrane"/>
    <property type="evidence" value="ECO:0007669"/>
    <property type="project" value="UniProtKB-SubCell"/>
</dbReference>
<dbReference type="GO" id="GO:0008021">
    <property type="term" value="C:synaptic vesicle"/>
    <property type="evidence" value="ECO:0007669"/>
    <property type="project" value="UniProtKB-SubCell"/>
</dbReference>
<dbReference type="InterPro" id="IPR004895">
    <property type="entry name" value="Prenylated_rab_accept_PRA1"/>
</dbReference>
<dbReference type="PANTHER" id="PTHR19317">
    <property type="entry name" value="PRENYLATED RAB ACCEPTOR 1-RELATED"/>
    <property type="match status" value="1"/>
</dbReference>
<dbReference type="PANTHER" id="PTHR19317:SF0">
    <property type="entry name" value="PRENYLATED RAB ACCEPTOR PROTEIN 1"/>
    <property type="match status" value="1"/>
</dbReference>
<dbReference type="Pfam" id="PF03208">
    <property type="entry name" value="PRA1"/>
    <property type="match status" value="1"/>
</dbReference>
<accession>Q8HY39</accession>
<evidence type="ECO:0000250" key="1"/>
<evidence type="ECO:0000250" key="2">
    <source>
        <dbReference type="UniProtKB" id="O35394"/>
    </source>
</evidence>
<evidence type="ECO:0000255" key="3"/>
<evidence type="ECO:0000305" key="4"/>
<gene>
    <name type="primary">RABAC1</name>
    <name type="synonym">PRA1</name>
    <name type="synonym">PRAF1</name>
</gene>
<feature type="chain" id="PRO_0000220877" description="Prenylated Rab acceptor protein 1">
    <location>
        <begin position="1"/>
        <end position="185"/>
    </location>
</feature>
<feature type="topological domain" description="Cytoplasmic" evidence="1">
    <location>
        <begin position="1"/>
        <end position="78"/>
    </location>
</feature>
<feature type="transmembrane region" description="Helical" evidence="1">
    <location>
        <begin position="79"/>
        <end position="94"/>
    </location>
</feature>
<feature type="transmembrane region" description="Helical" evidence="1">
    <location>
        <begin position="95"/>
        <end position="112"/>
    </location>
</feature>
<feature type="topological domain" description="Cytoplasmic" evidence="1">
    <location>
        <begin position="113"/>
        <end position="131"/>
    </location>
</feature>
<feature type="transmembrane region" description="Helical" evidence="1">
    <location>
        <begin position="132"/>
        <end position="148"/>
    </location>
</feature>
<feature type="transmembrane region" description="Helical" evidence="1">
    <location>
        <begin position="149"/>
        <end position="165"/>
    </location>
</feature>
<feature type="topological domain" description="Cytoplasmic" evidence="1">
    <location>
        <begin position="166"/>
        <end position="185"/>
    </location>
</feature>
<feature type="region of interest" description="Required for interaction with prenylated RAB3A and VAMP2" evidence="1">
    <location>
        <begin position="30"/>
        <end position="54"/>
    </location>
</feature>
<feature type="region of interest" description="Required for interaction with GDI1" evidence="1">
    <location>
        <begin position="165"/>
        <end position="185"/>
    </location>
</feature>
<feature type="region of interest" description="Homodimerization" evidence="1">
    <location>
        <begin position="175"/>
        <end position="185"/>
    </location>
</feature>
<feature type="region of interest" description="Required for interaction with prenylated RAB3A and VAMP2" evidence="1">
    <location>
        <begin position="175"/>
        <end position="185"/>
    </location>
</feature>
<keyword id="KW-1003">Cell membrane</keyword>
<keyword id="KW-0963">Cytoplasm</keyword>
<keyword id="KW-0968">Cytoplasmic vesicle</keyword>
<keyword id="KW-0333">Golgi apparatus</keyword>
<keyword id="KW-0472">Membrane</keyword>
<keyword id="KW-1185">Reference proteome</keyword>
<keyword id="KW-0770">Synapse</keyword>
<keyword id="KW-0812">Transmembrane</keyword>
<keyword id="KW-1133">Transmembrane helix</keyword>
<sequence>MAAEKDQQKDAEPEGLSATTLLPKLIPSGAGRERLERRRATIRPWSSFVDQRRFSRPRNLGELCQRLVRNVEYYQSNYVFVFLGLILYCVVTSPMLLVALAVFFGACYILYLRTLQSKFVLFGREVSPAHQYALAGGVSFPFFWLAGAGSAVFWVLGATLVVIGSHAAFHQMEAVDGEELQMEPV</sequence>
<comment type="function">
    <text evidence="2">General Rab protein regulator required for vesicle formation from the Golgi complex. May control vesicle docking and fusion by mediating the action of Rab GTPases to the SNARE complexes. In addition it inhibits the removal of Rab GTPases from the membrane by GDI1.</text>
</comment>
<comment type="subunit">
    <text evidence="1">Homodimer. Interacts with VAMP2 (synaptobrevin-2), prenylated Rab proteins, GDI1, NDRG1 and PCLO (By similarity).</text>
</comment>
<comment type="subcellular location">
    <subcellularLocation>
        <location evidence="2">Cell membrane</location>
        <topology evidence="3">Multi-pass membrane protein</topology>
    </subcellularLocation>
    <subcellularLocation>
        <location evidence="2">Cytoplasm</location>
    </subcellularLocation>
    <subcellularLocation>
        <location evidence="2">Golgi apparatus</location>
    </subcellularLocation>
    <subcellularLocation>
        <location evidence="2">Cytoplasmic vesicle</location>
        <location evidence="2">Secretory vesicle</location>
        <location evidence="2">Synaptic vesicle</location>
    </subcellularLocation>
    <text evidence="2">According to some authors, it is an integral membrane protein, while others showed that it is cytoplasmic and membrane-associated to Golgi and synaptic vesicles.</text>
</comment>
<comment type="similarity">
    <text evidence="4">Belongs to the PRA1 family.</text>
</comment>
<name>PRAF1_CANLF</name>
<proteinExistence type="evidence at transcript level"/>
<protein>
    <recommendedName>
        <fullName>Prenylated Rab acceptor protein 1</fullName>
    </recommendedName>
    <alternativeName>
        <fullName>PRA1 family protein 1</fullName>
    </alternativeName>
</protein>
<reference key="1">
    <citation type="submission" date="2002-12" db="EMBL/GenBank/DDBJ databases">
        <title>Pitfalls in the use of transfected surexpression systems for analyzing membranar proteins regulation: the case of TSH receptor and PRA-1.</title>
        <authorList>
            <person name="Jacobs C."/>
            <person name="Pirson I."/>
        </authorList>
    </citation>
    <scope>NUCLEOTIDE SEQUENCE [MRNA]</scope>
    <source>
        <tissue>Thyroid</tissue>
    </source>
</reference>